<evidence type="ECO:0000255" key="1">
    <source>
        <dbReference type="HAMAP-Rule" id="MF_00480"/>
    </source>
</evidence>
<evidence type="ECO:0000305" key="2"/>
<keyword id="KW-0687">Ribonucleoprotein</keyword>
<keyword id="KW-0689">Ribosomal protein</keyword>
<keyword id="KW-0694">RNA-binding</keyword>
<keyword id="KW-0699">rRNA-binding</keyword>
<keyword id="KW-0820">tRNA-binding</keyword>
<dbReference type="EMBL" id="CP000993">
    <property type="protein sequence ID" value="ACH94628.1"/>
    <property type="molecule type" value="Genomic_DNA"/>
</dbReference>
<dbReference type="RefSeq" id="WP_012538143.1">
    <property type="nucleotide sequence ID" value="NZ_CP169983.1"/>
</dbReference>
<dbReference type="SMR" id="B5RRJ4"/>
<dbReference type="KEGG" id="bre:BRE_384"/>
<dbReference type="HOGENOM" id="CLU_072226_1_1_12"/>
<dbReference type="Proteomes" id="UP000000612">
    <property type="component" value="Chromosome"/>
</dbReference>
<dbReference type="GO" id="GO:0015935">
    <property type="term" value="C:small ribosomal subunit"/>
    <property type="evidence" value="ECO:0007669"/>
    <property type="project" value="InterPro"/>
</dbReference>
<dbReference type="GO" id="GO:0019843">
    <property type="term" value="F:rRNA binding"/>
    <property type="evidence" value="ECO:0007669"/>
    <property type="project" value="UniProtKB-UniRule"/>
</dbReference>
<dbReference type="GO" id="GO:0003735">
    <property type="term" value="F:structural constituent of ribosome"/>
    <property type="evidence" value="ECO:0007669"/>
    <property type="project" value="InterPro"/>
</dbReference>
<dbReference type="GO" id="GO:0000049">
    <property type="term" value="F:tRNA binding"/>
    <property type="evidence" value="ECO:0007669"/>
    <property type="project" value="UniProtKB-UniRule"/>
</dbReference>
<dbReference type="GO" id="GO:0006412">
    <property type="term" value="P:translation"/>
    <property type="evidence" value="ECO:0007669"/>
    <property type="project" value="UniProtKB-UniRule"/>
</dbReference>
<dbReference type="CDD" id="cd14869">
    <property type="entry name" value="uS7_Bacteria"/>
    <property type="match status" value="1"/>
</dbReference>
<dbReference type="FunFam" id="1.10.455.10:FF:000001">
    <property type="entry name" value="30S ribosomal protein S7"/>
    <property type="match status" value="1"/>
</dbReference>
<dbReference type="Gene3D" id="1.10.455.10">
    <property type="entry name" value="Ribosomal protein S7 domain"/>
    <property type="match status" value="1"/>
</dbReference>
<dbReference type="HAMAP" id="MF_00480_B">
    <property type="entry name" value="Ribosomal_uS7_B"/>
    <property type="match status" value="1"/>
</dbReference>
<dbReference type="InterPro" id="IPR000235">
    <property type="entry name" value="Ribosomal_uS7"/>
</dbReference>
<dbReference type="InterPro" id="IPR005717">
    <property type="entry name" value="Ribosomal_uS7_bac/org-type"/>
</dbReference>
<dbReference type="InterPro" id="IPR020606">
    <property type="entry name" value="Ribosomal_uS7_CS"/>
</dbReference>
<dbReference type="InterPro" id="IPR023798">
    <property type="entry name" value="Ribosomal_uS7_dom"/>
</dbReference>
<dbReference type="InterPro" id="IPR036823">
    <property type="entry name" value="Ribosomal_uS7_dom_sf"/>
</dbReference>
<dbReference type="NCBIfam" id="TIGR01029">
    <property type="entry name" value="rpsG_bact"/>
    <property type="match status" value="1"/>
</dbReference>
<dbReference type="PANTHER" id="PTHR11205">
    <property type="entry name" value="RIBOSOMAL PROTEIN S7"/>
    <property type="match status" value="1"/>
</dbReference>
<dbReference type="Pfam" id="PF00177">
    <property type="entry name" value="Ribosomal_S7"/>
    <property type="match status" value="1"/>
</dbReference>
<dbReference type="PIRSF" id="PIRSF002122">
    <property type="entry name" value="RPS7p_RPS7a_RPS5e_RPS7o"/>
    <property type="match status" value="1"/>
</dbReference>
<dbReference type="SUPFAM" id="SSF47973">
    <property type="entry name" value="Ribosomal protein S7"/>
    <property type="match status" value="1"/>
</dbReference>
<dbReference type="PROSITE" id="PS00052">
    <property type="entry name" value="RIBOSOMAL_S7"/>
    <property type="match status" value="1"/>
</dbReference>
<accession>B5RRJ4</accession>
<sequence>MSRKSKKIKKKVFKDSKYDSQVIAKFVNRMMYDGKKFISESIVYNSIDMLAEKLEEVDKVAAFNKALDNVKPLVEVRSRRVGGATYQVPVEVREERREALAMKWIISAARKASGKSMQEKLANELVNSYNSTGAAFKKREDTHRMAEANRAFTHYRW</sequence>
<reference key="1">
    <citation type="journal article" date="2008" name="PLoS Genet.">
        <title>The genome of Borrelia recurrentis, the agent of deadly louse-borne relapsing fever, is a degraded subset of tick-borne Borrelia duttonii.</title>
        <authorList>
            <person name="Lescot M."/>
            <person name="Audic S."/>
            <person name="Robert C."/>
            <person name="Nguyen T.T."/>
            <person name="Blanc G."/>
            <person name="Cutler S.J."/>
            <person name="Wincker P."/>
            <person name="Couloux A."/>
            <person name="Claverie J.-M."/>
            <person name="Raoult D."/>
            <person name="Drancourt M."/>
        </authorList>
    </citation>
    <scope>NUCLEOTIDE SEQUENCE [LARGE SCALE GENOMIC DNA]</scope>
    <source>
        <strain>A1</strain>
    </source>
</reference>
<proteinExistence type="inferred from homology"/>
<comment type="function">
    <text evidence="1">One of the primary rRNA binding proteins, it binds directly to 16S rRNA where it nucleates assembly of the head domain of the 30S subunit. Is located at the subunit interface close to the decoding center, probably blocks exit of the E-site tRNA.</text>
</comment>
<comment type="subunit">
    <text evidence="1">Part of the 30S ribosomal subunit. Contacts proteins S9 and S11.</text>
</comment>
<comment type="similarity">
    <text evidence="1">Belongs to the universal ribosomal protein uS7 family.</text>
</comment>
<name>RS7_BORRA</name>
<feature type="chain" id="PRO_1000125903" description="Small ribosomal subunit protein uS7">
    <location>
        <begin position="1"/>
        <end position="157"/>
    </location>
</feature>
<organism>
    <name type="scientific">Borrelia recurrentis (strain A1)</name>
    <dbReference type="NCBI Taxonomy" id="412418"/>
    <lineage>
        <taxon>Bacteria</taxon>
        <taxon>Pseudomonadati</taxon>
        <taxon>Spirochaetota</taxon>
        <taxon>Spirochaetia</taxon>
        <taxon>Spirochaetales</taxon>
        <taxon>Borreliaceae</taxon>
        <taxon>Borrelia</taxon>
    </lineage>
</organism>
<gene>
    <name evidence="1" type="primary">rpsG</name>
    <name type="ordered locus">BRE_384</name>
</gene>
<protein>
    <recommendedName>
        <fullName evidence="1">Small ribosomal subunit protein uS7</fullName>
    </recommendedName>
    <alternativeName>
        <fullName evidence="2">30S ribosomal protein S7</fullName>
    </alternativeName>
</protein>